<accession>Q7NFH8</accession>
<dbReference type="EC" id="4.6.1.12" evidence="1"/>
<dbReference type="EMBL" id="BA000045">
    <property type="protein sequence ID" value="BAC91488.1"/>
    <property type="molecule type" value="Genomic_DNA"/>
</dbReference>
<dbReference type="RefSeq" id="NP_926493.1">
    <property type="nucleotide sequence ID" value="NC_005125.1"/>
</dbReference>
<dbReference type="SMR" id="Q7NFH8"/>
<dbReference type="FunCoup" id="Q7NFH8">
    <property type="interactions" value="225"/>
</dbReference>
<dbReference type="STRING" id="251221.gene:10761060"/>
<dbReference type="EnsemblBacteria" id="BAC91488">
    <property type="protein sequence ID" value="BAC91488"/>
    <property type="gene ID" value="BAC91488"/>
</dbReference>
<dbReference type="KEGG" id="gvi:glr3547"/>
<dbReference type="PATRIC" id="fig|251221.4.peg.3580"/>
<dbReference type="eggNOG" id="COG0245">
    <property type="taxonomic scope" value="Bacteria"/>
</dbReference>
<dbReference type="HOGENOM" id="CLU_084630_2_0_3"/>
<dbReference type="InParanoid" id="Q7NFH8"/>
<dbReference type="OrthoDB" id="9804336at2"/>
<dbReference type="PhylomeDB" id="Q7NFH8"/>
<dbReference type="UniPathway" id="UPA00056">
    <property type="reaction ID" value="UER00095"/>
</dbReference>
<dbReference type="Proteomes" id="UP000000557">
    <property type="component" value="Chromosome"/>
</dbReference>
<dbReference type="GO" id="GO:0008685">
    <property type="term" value="F:2-C-methyl-D-erythritol 2,4-cyclodiphosphate synthase activity"/>
    <property type="evidence" value="ECO:0000318"/>
    <property type="project" value="GO_Central"/>
</dbReference>
<dbReference type="GO" id="GO:0046872">
    <property type="term" value="F:metal ion binding"/>
    <property type="evidence" value="ECO:0007669"/>
    <property type="project" value="UniProtKB-KW"/>
</dbReference>
<dbReference type="GO" id="GO:0019288">
    <property type="term" value="P:isopentenyl diphosphate biosynthetic process, methylerythritol 4-phosphate pathway"/>
    <property type="evidence" value="ECO:0007669"/>
    <property type="project" value="UniProtKB-UniRule"/>
</dbReference>
<dbReference type="GO" id="GO:0016114">
    <property type="term" value="P:terpenoid biosynthetic process"/>
    <property type="evidence" value="ECO:0007669"/>
    <property type="project" value="InterPro"/>
</dbReference>
<dbReference type="CDD" id="cd00554">
    <property type="entry name" value="MECDP_synthase"/>
    <property type="match status" value="1"/>
</dbReference>
<dbReference type="FunFam" id="3.30.1330.50:FF:000003">
    <property type="entry name" value="2-C-methyl-D-erythritol 2,4-cyclodiphosphate synthase"/>
    <property type="match status" value="1"/>
</dbReference>
<dbReference type="Gene3D" id="3.30.1330.50">
    <property type="entry name" value="2-C-methyl-D-erythritol 2,4-cyclodiphosphate synthase"/>
    <property type="match status" value="1"/>
</dbReference>
<dbReference type="HAMAP" id="MF_00107">
    <property type="entry name" value="IspF"/>
    <property type="match status" value="1"/>
</dbReference>
<dbReference type="InterPro" id="IPR003526">
    <property type="entry name" value="MECDP_synthase"/>
</dbReference>
<dbReference type="InterPro" id="IPR020555">
    <property type="entry name" value="MECDP_synthase_CS"/>
</dbReference>
<dbReference type="InterPro" id="IPR036571">
    <property type="entry name" value="MECDP_synthase_sf"/>
</dbReference>
<dbReference type="NCBIfam" id="TIGR00151">
    <property type="entry name" value="ispF"/>
    <property type="match status" value="1"/>
</dbReference>
<dbReference type="PANTHER" id="PTHR43181">
    <property type="entry name" value="2-C-METHYL-D-ERYTHRITOL 2,4-CYCLODIPHOSPHATE SYNTHASE, CHLOROPLASTIC"/>
    <property type="match status" value="1"/>
</dbReference>
<dbReference type="PANTHER" id="PTHR43181:SF1">
    <property type="entry name" value="2-C-METHYL-D-ERYTHRITOL 2,4-CYCLODIPHOSPHATE SYNTHASE, CHLOROPLASTIC"/>
    <property type="match status" value="1"/>
</dbReference>
<dbReference type="Pfam" id="PF02542">
    <property type="entry name" value="YgbB"/>
    <property type="match status" value="1"/>
</dbReference>
<dbReference type="SUPFAM" id="SSF69765">
    <property type="entry name" value="IpsF-like"/>
    <property type="match status" value="1"/>
</dbReference>
<dbReference type="PROSITE" id="PS01350">
    <property type="entry name" value="ISPF"/>
    <property type="match status" value="1"/>
</dbReference>
<name>ISPF_GLOVI</name>
<feature type="chain" id="PRO_0000189471" description="2-C-methyl-D-erythritol 2,4-cyclodiphosphate synthase">
    <location>
        <begin position="1"/>
        <end position="163"/>
    </location>
</feature>
<feature type="binding site" evidence="1">
    <location>
        <begin position="15"/>
        <end position="17"/>
    </location>
    <ligand>
        <name>4-CDP-2-C-methyl-D-erythritol 2-phosphate</name>
        <dbReference type="ChEBI" id="CHEBI:57919"/>
    </ligand>
</feature>
<feature type="binding site" evidence="1">
    <location>
        <position position="15"/>
    </location>
    <ligand>
        <name>a divalent metal cation</name>
        <dbReference type="ChEBI" id="CHEBI:60240"/>
    </ligand>
</feature>
<feature type="binding site" evidence="1">
    <location>
        <position position="17"/>
    </location>
    <ligand>
        <name>a divalent metal cation</name>
        <dbReference type="ChEBI" id="CHEBI:60240"/>
    </ligand>
</feature>
<feature type="binding site" evidence="1">
    <location>
        <begin position="41"/>
        <end position="42"/>
    </location>
    <ligand>
        <name>4-CDP-2-C-methyl-D-erythritol 2-phosphate</name>
        <dbReference type="ChEBI" id="CHEBI:57919"/>
    </ligand>
</feature>
<feature type="binding site" evidence="1">
    <location>
        <position position="49"/>
    </location>
    <ligand>
        <name>a divalent metal cation</name>
        <dbReference type="ChEBI" id="CHEBI:60240"/>
    </ligand>
</feature>
<feature type="binding site" evidence="1">
    <location>
        <begin position="63"/>
        <end position="65"/>
    </location>
    <ligand>
        <name>4-CDP-2-C-methyl-D-erythritol 2-phosphate</name>
        <dbReference type="ChEBI" id="CHEBI:57919"/>
    </ligand>
</feature>
<feature type="binding site" evidence="1">
    <location>
        <begin position="139"/>
        <end position="142"/>
    </location>
    <ligand>
        <name>4-CDP-2-C-methyl-D-erythritol 2-phosphate</name>
        <dbReference type="ChEBI" id="CHEBI:57919"/>
    </ligand>
</feature>
<feature type="site" description="Transition state stabilizer" evidence="1">
    <location>
        <position position="41"/>
    </location>
</feature>
<feature type="site" description="Transition state stabilizer" evidence="1">
    <location>
        <position position="140"/>
    </location>
</feature>
<organism>
    <name type="scientific">Gloeobacter violaceus (strain ATCC 29082 / PCC 7421)</name>
    <dbReference type="NCBI Taxonomy" id="251221"/>
    <lineage>
        <taxon>Bacteria</taxon>
        <taxon>Bacillati</taxon>
        <taxon>Cyanobacteriota</taxon>
        <taxon>Cyanophyceae</taxon>
        <taxon>Gloeobacterales</taxon>
        <taxon>Gloeobacteraceae</taxon>
        <taxon>Gloeobacter</taxon>
    </lineage>
</organism>
<keyword id="KW-0414">Isoprene biosynthesis</keyword>
<keyword id="KW-0456">Lyase</keyword>
<keyword id="KW-0479">Metal-binding</keyword>
<keyword id="KW-1185">Reference proteome</keyword>
<reference key="1">
    <citation type="journal article" date="2003" name="DNA Res.">
        <title>Complete genome structure of Gloeobacter violaceus PCC 7421, a cyanobacterium that lacks thylakoids.</title>
        <authorList>
            <person name="Nakamura Y."/>
            <person name="Kaneko T."/>
            <person name="Sato S."/>
            <person name="Mimuro M."/>
            <person name="Miyashita H."/>
            <person name="Tsuchiya T."/>
            <person name="Sasamoto S."/>
            <person name="Watanabe A."/>
            <person name="Kawashima K."/>
            <person name="Kishida Y."/>
            <person name="Kiyokawa C."/>
            <person name="Kohara M."/>
            <person name="Matsumoto M."/>
            <person name="Matsuno A."/>
            <person name="Nakazaki N."/>
            <person name="Shimpo S."/>
            <person name="Takeuchi C."/>
            <person name="Yamada M."/>
            <person name="Tabata S."/>
        </authorList>
    </citation>
    <scope>NUCLEOTIDE SEQUENCE [LARGE SCALE GENOMIC DNA]</scope>
    <source>
        <strain>ATCC 29082 / PCC 7421</strain>
    </source>
</reference>
<evidence type="ECO:0000255" key="1">
    <source>
        <dbReference type="HAMAP-Rule" id="MF_00107"/>
    </source>
</evidence>
<gene>
    <name evidence="1" type="primary">ispF</name>
    <name type="ordered locus">glr3547</name>
</gene>
<comment type="function">
    <text evidence="1">Involved in the biosynthesis of isopentenyl diphosphate (IPP) and dimethylallyl diphosphate (DMAPP), two major building blocks of isoprenoid compounds. Catalyzes the conversion of 4-diphosphocytidyl-2-C-methyl-D-erythritol 2-phosphate (CDP-ME2P) to 2-C-methyl-D-erythritol 2,4-cyclodiphosphate (ME-CPP) with a corresponding release of cytidine 5-monophosphate (CMP).</text>
</comment>
<comment type="catalytic activity">
    <reaction evidence="1">
        <text>4-CDP-2-C-methyl-D-erythritol 2-phosphate = 2-C-methyl-D-erythritol 2,4-cyclic diphosphate + CMP</text>
        <dbReference type="Rhea" id="RHEA:23864"/>
        <dbReference type="ChEBI" id="CHEBI:57919"/>
        <dbReference type="ChEBI" id="CHEBI:58483"/>
        <dbReference type="ChEBI" id="CHEBI:60377"/>
        <dbReference type="EC" id="4.6.1.12"/>
    </reaction>
</comment>
<comment type="cofactor">
    <cofactor evidence="1">
        <name>a divalent metal cation</name>
        <dbReference type="ChEBI" id="CHEBI:60240"/>
    </cofactor>
    <text evidence="1">Binds 1 divalent metal cation per subunit.</text>
</comment>
<comment type="pathway">
    <text evidence="1">Isoprenoid biosynthesis; isopentenyl diphosphate biosynthesis via DXP pathway; isopentenyl diphosphate from 1-deoxy-D-xylulose 5-phosphate: step 4/6.</text>
</comment>
<comment type="subunit">
    <text evidence="1">Homotrimer.</text>
</comment>
<comment type="similarity">
    <text evidence="1">Belongs to the IspF family.</text>
</comment>
<protein>
    <recommendedName>
        <fullName evidence="1">2-C-methyl-D-erythritol 2,4-cyclodiphosphate synthase</fullName>
        <shortName evidence="1">MECDP-synthase</shortName>
        <shortName evidence="1">MECPP-synthase</shortName>
        <shortName evidence="1">MECPS</shortName>
        <ecNumber evidence="1">4.6.1.12</ecNumber>
    </recommendedName>
</protein>
<proteinExistence type="inferred from homology"/>
<sequence length="163" mass="17263">MAVGGFEMRIGNGYDFHRLVEGRRLILGGVEIPYRLGLLGHSDADLLTHAITDALLGAACLGDIGRHFPPGDPQWQDVSSLLLLSKVLELVRGRGLRLSNVDAVVVAERPKLAPHIPAIRQSLAGALGLPLDRLSVKATTNEGLGPVGEGLAMACHAVVLLEE</sequence>